<dbReference type="EMBL" id="AM933172">
    <property type="protein sequence ID" value="CAR34681.1"/>
    <property type="molecule type" value="Genomic_DNA"/>
</dbReference>
<dbReference type="RefSeq" id="WP_000380404.1">
    <property type="nucleotide sequence ID" value="NC_011294.1"/>
</dbReference>
<dbReference type="SMR" id="B5QZU2"/>
<dbReference type="KEGG" id="set:SEN3105"/>
<dbReference type="HOGENOM" id="CLU_105087_3_0_6"/>
<dbReference type="Proteomes" id="UP000000613">
    <property type="component" value="Chromosome"/>
</dbReference>
<dbReference type="Gene3D" id="2.30.110.10">
    <property type="entry name" value="Electron Transport, Fmn-binding Protein, Chain A"/>
    <property type="match status" value="1"/>
</dbReference>
<dbReference type="HAMAP" id="MF_00764">
    <property type="entry name" value="UPF0306"/>
    <property type="match status" value="1"/>
</dbReference>
<dbReference type="InterPro" id="IPR012349">
    <property type="entry name" value="Split_barrel_FMN-bd"/>
</dbReference>
<dbReference type="InterPro" id="IPR011194">
    <property type="entry name" value="UPF0306"/>
</dbReference>
<dbReference type="NCBIfam" id="NF002900">
    <property type="entry name" value="PRK03467.1"/>
    <property type="match status" value="1"/>
</dbReference>
<dbReference type="PIRSF" id="PIRSF009554">
    <property type="entry name" value="UCP009554"/>
    <property type="match status" value="1"/>
</dbReference>
<dbReference type="SUPFAM" id="SSF50475">
    <property type="entry name" value="FMN-binding split barrel"/>
    <property type="match status" value="1"/>
</dbReference>
<gene>
    <name evidence="1" type="primary">yhbP</name>
    <name type="ordered locus">SEN3105</name>
</gene>
<reference key="1">
    <citation type="journal article" date="2008" name="Genome Res.">
        <title>Comparative genome analysis of Salmonella enteritidis PT4 and Salmonella gallinarum 287/91 provides insights into evolutionary and host adaptation pathways.</title>
        <authorList>
            <person name="Thomson N.R."/>
            <person name="Clayton D.J."/>
            <person name="Windhorst D."/>
            <person name="Vernikos G."/>
            <person name="Davidson S."/>
            <person name="Churcher C."/>
            <person name="Quail M.A."/>
            <person name="Stevens M."/>
            <person name="Jones M.A."/>
            <person name="Watson M."/>
            <person name="Barron A."/>
            <person name="Layton A."/>
            <person name="Pickard D."/>
            <person name="Kingsley R.A."/>
            <person name="Bignell A."/>
            <person name="Clark L."/>
            <person name="Harris B."/>
            <person name="Ormond D."/>
            <person name="Abdellah Z."/>
            <person name="Brooks K."/>
            <person name="Cherevach I."/>
            <person name="Chillingworth T."/>
            <person name="Woodward J."/>
            <person name="Norberczak H."/>
            <person name="Lord A."/>
            <person name="Arrowsmith C."/>
            <person name="Jagels K."/>
            <person name="Moule S."/>
            <person name="Mungall K."/>
            <person name="Saunders M."/>
            <person name="Whitehead S."/>
            <person name="Chabalgoity J.A."/>
            <person name="Maskell D."/>
            <person name="Humphreys T."/>
            <person name="Roberts M."/>
            <person name="Barrow P.A."/>
            <person name="Dougan G."/>
            <person name="Parkhill J."/>
        </authorList>
    </citation>
    <scope>NUCLEOTIDE SEQUENCE [LARGE SCALE GENOMIC DNA]</scope>
    <source>
        <strain>P125109</strain>
    </source>
</reference>
<protein>
    <recommendedName>
        <fullName evidence="1">UPF0306 protein YhbP</fullName>
    </recommendedName>
</protein>
<sequence>MDTLTAIGRWLAKQHVVTWCVHHEGELWCANAFYLFDAQNVALYLLTDDKTRHAQMSGACAPVAGTVNGQPKTVARIRGVQFKGEIRRLEGQESDAARKAYLRRFPVARVLPAPVWEIRLDEIKFTDNTLGFGKKLHWLRDSRAQQA</sequence>
<organism>
    <name type="scientific">Salmonella enteritidis PT4 (strain P125109)</name>
    <dbReference type="NCBI Taxonomy" id="550537"/>
    <lineage>
        <taxon>Bacteria</taxon>
        <taxon>Pseudomonadati</taxon>
        <taxon>Pseudomonadota</taxon>
        <taxon>Gammaproteobacteria</taxon>
        <taxon>Enterobacterales</taxon>
        <taxon>Enterobacteriaceae</taxon>
        <taxon>Salmonella</taxon>
    </lineage>
</organism>
<name>YHBP_SALEP</name>
<proteinExistence type="inferred from homology"/>
<feature type="chain" id="PRO_1000198363" description="UPF0306 protein YhbP">
    <location>
        <begin position="1"/>
        <end position="147"/>
    </location>
</feature>
<accession>B5QZU2</accession>
<evidence type="ECO:0000255" key="1">
    <source>
        <dbReference type="HAMAP-Rule" id="MF_00764"/>
    </source>
</evidence>
<comment type="similarity">
    <text evidence="1">Belongs to the UPF0306 family.</text>
</comment>